<name>PROF2_MOUSE</name>
<protein>
    <recommendedName>
        <fullName>Profilin-2</fullName>
    </recommendedName>
    <alternativeName>
        <fullName>Profilin II</fullName>
    </alternativeName>
</protein>
<sequence length="140" mass="15032">MAGWQSYVDNLMCDGCCQEAAIVGYCDAKYVWAATAGGVFQSITPVEIDMIVGKDREGFFTNGLTLGAKKCSVIRDSLYVDGDCTMDIRTKSQGGEPTYNVAVGRAGRVLVFVMGKEGVHGGGLNKKAYSMAKYLRDSGF</sequence>
<reference key="1">
    <citation type="journal article" date="2000" name="J. Cell Sci.">
        <title>Alternative splicing of the mouse profilin II gene generates functionally different profilin isoforms.</title>
        <authorList>
            <person name="Di Nardo A."/>
            <person name="Gareus R."/>
            <person name="Kwiatkowski D."/>
            <person name="Witke W."/>
        </authorList>
    </citation>
    <scope>NUCLEOTIDE SEQUENCE [MRNA] (ISOFORMS 1 AND 2)</scope>
</reference>
<reference key="2">
    <citation type="journal article" date="2000" name="Mol. Cell. Biol.">
        <title>Profilin II is alternatively spliced, resulting in profilin isoforms that are differentially expressed and have distinct biochemical properties.</title>
        <authorList>
            <person name="Lambrechts A."/>
            <person name="Braun A."/>
            <person name="Jonckheere V."/>
            <person name="Aszodi A."/>
            <person name="Lanier L.M."/>
            <person name="Robbens J."/>
            <person name="Van Colen I."/>
            <person name="Vandekerckhove J."/>
            <person name="Faessler R."/>
            <person name="Ampe C."/>
        </authorList>
    </citation>
    <scope>NUCLEOTIDE SEQUENCE [GENOMIC DNA]</scope>
</reference>
<reference key="3">
    <citation type="journal article" date="2005" name="Science">
        <title>The transcriptional landscape of the mammalian genome.</title>
        <authorList>
            <person name="Carninci P."/>
            <person name="Kasukawa T."/>
            <person name="Katayama S."/>
            <person name="Gough J."/>
            <person name="Frith M.C."/>
            <person name="Maeda N."/>
            <person name="Oyama R."/>
            <person name="Ravasi T."/>
            <person name="Lenhard B."/>
            <person name="Wells C."/>
            <person name="Kodzius R."/>
            <person name="Shimokawa K."/>
            <person name="Bajic V.B."/>
            <person name="Brenner S.E."/>
            <person name="Batalov S."/>
            <person name="Forrest A.R."/>
            <person name="Zavolan M."/>
            <person name="Davis M.J."/>
            <person name="Wilming L.G."/>
            <person name="Aidinis V."/>
            <person name="Allen J.E."/>
            <person name="Ambesi-Impiombato A."/>
            <person name="Apweiler R."/>
            <person name="Aturaliya R.N."/>
            <person name="Bailey T.L."/>
            <person name="Bansal M."/>
            <person name="Baxter L."/>
            <person name="Beisel K.W."/>
            <person name="Bersano T."/>
            <person name="Bono H."/>
            <person name="Chalk A.M."/>
            <person name="Chiu K.P."/>
            <person name="Choudhary V."/>
            <person name="Christoffels A."/>
            <person name="Clutterbuck D.R."/>
            <person name="Crowe M.L."/>
            <person name="Dalla E."/>
            <person name="Dalrymple B.P."/>
            <person name="de Bono B."/>
            <person name="Della Gatta G."/>
            <person name="di Bernardo D."/>
            <person name="Down T."/>
            <person name="Engstrom P."/>
            <person name="Fagiolini M."/>
            <person name="Faulkner G."/>
            <person name="Fletcher C.F."/>
            <person name="Fukushima T."/>
            <person name="Furuno M."/>
            <person name="Futaki S."/>
            <person name="Gariboldi M."/>
            <person name="Georgii-Hemming P."/>
            <person name="Gingeras T.R."/>
            <person name="Gojobori T."/>
            <person name="Green R.E."/>
            <person name="Gustincich S."/>
            <person name="Harbers M."/>
            <person name="Hayashi Y."/>
            <person name="Hensch T.K."/>
            <person name="Hirokawa N."/>
            <person name="Hill D."/>
            <person name="Huminiecki L."/>
            <person name="Iacono M."/>
            <person name="Ikeo K."/>
            <person name="Iwama A."/>
            <person name="Ishikawa T."/>
            <person name="Jakt M."/>
            <person name="Kanapin A."/>
            <person name="Katoh M."/>
            <person name="Kawasawa Y."/>
            <person name="Kelso J."/>
            <person name="Kitamura H."/>
            <person name="Kitano H."/>
            <person name="Kollias G."/>
            <person name="Krishnan S.P."/>
            <person name="Kruger A."/>
            <person name="Kummerfeld S.K."/>
            <person name="Kurochkin I.V."/>
            <person name="Lareau L.F."/>
            <person name="Lazarevic D."/>
            <person name="Lipovich L."/>
            <person name="Liu J."/>
            <person name="Liuni S."/>
            <person name="McWilliam S."/>
            <person name="Madan Babu M."/>
            <person name="Madera M."/>
            <person name="Marchionni L."/>
            <person name="Matsuda H."/>
            <person name="Matsuzawa S."/>
            <person name="Miki H."/>
            <person name="Mignone F."/>
            <person name="Miyake S."/>
            <person name="Morris K."/>
            <person name="Mottagui-Tabar S."/>
            <person name="Mulder N."/>
            <person name="Nakano N."/>
            <person name="Nakauchi H."/>
            <person name="Ng P."/>
            <person name="Nilsson R."/>
            <person name="Nishiguchi S."/>
            <person name="Nishikawa S."/>
            <person name="Nori F."/>
            <person name="Ohara O."/>
            <person name="Okazaki Y."/>
            <person name="Orlando V."/>
            <person name="Pang K.C."/>
            <person name="Pavan W.J."/>
            <person name="Pavesi G."/>
            <person name="Pesole G."/>
            <person name="Petrovsky N."/>
            <person name="Piazza S."/>
            <person name="Reed J."/>
            <person name="Reid J.F."/>
            <person name="Ring B.Z."/>
            <person name="Ringwald M."/>
            <person name="Rost B."/>
            <person name="Ruan Y."/>
            <person name="Salzberg S.L."/>
            <person name="Sandelin A."/>
            <person name="Schneider C."/>
            <person name="Schoenbach C."/>
            <person name="Sekiguchi K."/>
            <person name="Semple C.A."/>
            <person name="Seno S."/>
            <person name="Sessa L."/>
            <person name="Sheng Y."/>
            <person name="Shibata Y."/>
            <person name="Shimada H."/>
            <person name="Shimada K."/>
            <person name="Silva D."/>
            <person name="Sinclair B."/>
            <person name="Sperling S."/>
            <person name="Stupka E."/>
            <person name="Sugiura K."/>
            <person name="Sultana R."/>
            <person name="Takenaka Y."/>
            <person name="Taki K."/>
            <person name="Tammoja K."/>
            <person name="Tan S.L."/>
            <person name="Tang S."/>
            <person name="Taylor M.S."/>
            <person name="Tegner J."/>
            <person name="Teichmann S.A."/>
            <person name="Ueda H.R."/>
            <person name="van Nimwegen E."/>
            <person name="Verardo R."/>
            <person name="Wei C.L."/>
            <person name="Yagi K."/>
            <person name="Yamanishi H."/>
            <person name="Zabarovsky E."/>
            <person name="Zhu S."/>
            <person name="Zimmer A."/>
            <person name="Hide W."/>
            <person name="Bult C."/>
            <person name="Grimmond S.M."/>
            <person name="Teasdale R.D."/>
            <person name="Liu E.T."/>
            <person name="Brusic V."/>
            <person name="Quackenbush J."/>
            <person name="Wahlestedt C."/>
            <person name="Mattick J.S."/>
            <person name="Hume D.A."/>
            <person name="Kai C."/>
            <person name="Sasaki D."/>
            <person name="Tomaru Y."/>
            <person name="Fukuda S."/>
            <person name="Kanamori-Katayama M."/>
            <person name="Suzuki M."/>
            <person name="Aoki J."/>
            <person name="Arakawa T."/>
            <person name="Iida J."/>
            <person name="Imamura K."/>
            <person name="Itoh M."/>
            <person name="Kato T."/>
            <person name="Kawaji H."/>
            <person name="Kawagashira N."/>
            <person name="Kawashima T."/>
            <person name="Kojima M."/>
            <person name="Kondo S."/>
            <person name="Konno H."/>
            <person name="Nakano K."/>
            <person name="Ninomiya N."/>
            <person name="Nishio T."/>
            <person name="Okada M."/>
            <person name="Plessy C."/>
            <person name="Shibata K."/>
            <person name="Shiraki T."/>
            <person name="Suzuki S."/>
            <person name="Tagami M."/>
            <person name="Waki K."/>
            <person name="Watahiki A."/>
            <person name="Okamura-Oho Y."/>
            <person name="Suzuki H."/>
            <person name="Kawai J."/>
            <person name="Hayashizaki Y."/>
        </authorList>
    </citation>
    <scope>NUCLEOTIDE SEQUENCE [LARGE SCALE MRNA] (ISOFORMS 1 AND 3)</scope>
    <source>
        <strain>C57BL/6J</strain>
        <tissue>Hippocampus</tissue>
        <tissue>Testis</tissue>
    </source>
</reference>
<reference key="4">
    <citation type="journal article" date="2004" name="Genome Res.">
        <title>The status, quality, and expansion of the NIH full-length cDNA project: the Mammalian Gene Collection (MGC).</title>
        <authorList>
            <consortium name="The MGC Project Team"/>
        </authorList>
    </citation>
    <scope>NUCLEOTIDE SEQUENCE [LARGE SCALE MRNA] (ISOFORM 1)</scope>
</reference>
<reference key="5">
    <citation type="submission" date="2007-03" db="UniProtKB">
        <authorList>
            <person name="Lubec G."/>
            <person name="Klug S."/>
        </authorList>
    </citation>
    <scope>PROTEIN SEQUENCE OF 55-69; 76-89 AND 92-105</scope>
    <scope>IDENTIFICATION BY MASS SPECTROMETRY</scope>
    <source>
        <tissue>Hippocampus</tissue>
    </source>
</reference>
<reference key="6">
    <citation type="journal article" date="2009" name="J. Biomol. Screen.">
        <title>The interaction of proline-rich ligands with profilin probed with an enzyme-linked immunosorbent assay.</title>
        <authorList>
            <person name="Veniere S."/>
            <person name="Ampe C."/>
            <person name="Vandekerckhove J."/>
            <person name="Lambrechts A."/>
        </authorList>
    </citation>
    <scope>INTERACTION WITH PFN2</scope>
</reference>
<reference key="7">
    <citation type="journal article" date="2010" name="Cell">
        <title>A tissue-specific atlas of mouse protein phosphorylation and expression.</title>
        <authorList>
            <person name="Huttlin E.L."/>
            <person name="Jedrychowski M.P."/>
            <person name="Elias J.E."/>
            <person name="Goswami T."/>
            <person name="Rad R."/>
            <person name="Beausoleil S.A."/>
            <person name="Villen J."/>
            <person name="Haas W."/>
            <person name="Sowa M.E."/>
            <person name="Gygi S.P."/>
        </authorList>
    </citation>
    <scope>IDENTIFICATION BY MASS SPECTROMETRY [LARGE SCALE ANALYSIS]</scope>
    <source>
        <tissue>Brain</tissue>
        <tissue>Brown adipose tissue</tissue>
        <tissue>Kidney</tissue>
        <tissue>Liver</tissue>
        <tissue>Testis</tissue>
    </source>
</reference>
<proteinExistence type="evidence at protein level"/>
<gene>
    <name type="primary">Pfn2</name>
</gene>
<dbReference type="EMBL" id="AJ272203">
    <property type="protein sequence ID" value="CAB87382.1"/>
    <property type="molecule type" value="mRNA"/>
</dbReference>
<dbReference type="EMBL" id="AF237680">
    <property type="protein sequence ID" value="AAG09753.1"/>
    <property type="molecule type" value="Genomic_DNA"/>
</dbReference>
<dbReference type="EMBL" id="AF237680">
    <property type="protein sequence ID" value="AAG09755.1"/>
    <property type="molecule type" value="Genomic_DNA"/>
</dbReference>
<dbReference type="EMBL" id="AF237680">
    <property type="protein sequence ID" value="AAG09756.1"/>
    <property type="molecule type" value="Genomic_DNA"/>
</dbReference>
<dbReference type="EMBL" id="AK132651">
    <property type="protein sequence ID" value="BAE21281.1"/>
    <property type="molecule type" value="mRNA"/>
</dbReference>
<dbReference type="EMBL" id="AK164145">
    <property type="protein sequence ID" value="BAE37648.1"/>
    <property type="molecule type" value="mRNA"/>
</dbReference>
<dbReference type="EMBL" id="BC024363">
    <property type="protein sequence ID" value="AAH24363.1"/>
    <property type="molecule type" value="mRNA"/>
</dbReference>
<dbReference type="CCDS" id="CCDS17364.1">
    <molecule id="Q9JJV2-1"/>
</dbReference>
<dbReference type="RefSeq" id="NP_062283.1">
    <molecule id="Q9JJV2-1"/>
    <property type="nucleotide sequence ID" value="NM_019410.3"/>
</dbReference>
<dbReference type="PDB" id="2V8C">
    <property type="method" value="X-ray"/>
    <property type="resolution" value="1.98 A"/>
    <property type="chains" value="A=1-140"/>
</dbReference>
<dbReference type="PDB" id="2V8F">
    <property type="method" value="X-ray"/>
    <property type="resolution" value="1.10 A"/>
    <property type="chains" value="A/B=1-140"/>
</dbReference>
<dbReference type="PDBsum" id="2V8C"/>
<dbReference type="PDBsum" id="2V8F"/>
<dbReference type="BMRB" id="Q9JJV2"/>
<dbReference type="SMR" id="Q9JJV2"/>
<dbReference type="BioGRID" id="202127">
    <property type="interactions" value="31"/>
</dbReference>
<dbReference type="CORUM" id="Q9JJV2"/>
<dbReference type="FunCoup" id="Q9JJV2">
    <property type="interactions" value="879"/>
</dbReference>
<dbReference type="IntAct" id="Q9JJV2">
    <property type="interactions" value="5"/>
</dbReference>
<dbReference type="MINT" id="Q9JJV2"/>
<dbReference type="STRING" id="10090.ENSMUSP00000068890"/>
<dbReference type="GlyGen" id="Q9JJV2">
    <property type="glycosylation" value="1 site, 1 O-linked glycan (1 site)"/>
</dbReference>
<dbReference type="iPTMnet" id="Q9JJV2"/>
<dbReference type="PhosphoSitePlus" id="Q9JJV2"/>
<dbReference type="SwissPalm" id="Q9JJV2"/>
<dbReference type="REPRODUCTION-2DPAGE" id="Q9JJV2"/>
<dbReference type="jPOST" id="Q9JJV2"/>
<dbReference type="PaxDb" id="10090-ENSMUSP00000068890"/>
<dbReference type="PeptideAtlas" id="Q9JJV2"/>
<dbReference type="ProteomicsDB" id="291596">
    <molecule id="Q9JJV2-1"/>
</dbReference>
<dbReference type="ProteomicsDB" id="291597">
    <molecule id="Q9JJV2-2"/>
</dbReference>
<dbReference type="ProteomicsDB" id="291598">
    <molecule id="Q9JJV2-3"/>
</dbReference>
<dbReference type="Pumba" id="Q9JJV2"/>
<dbReference type="Antibodypedia" id="33583">
    <property type="antibodies" value="263 antibodies from 31 providers"/>
</dbReference>
<dbReference type="DNASU" id="18645"/>
<dbReference type="Ensembl" id="ENSMUST00000066882.10">
    <molecule id="Q9JJV2-1"/>
    <property type="protein sequence ID" value="ENSMUSP00000068890.9"/>
    <property type="gene ID" value="ENSMUSG00000027805.17"/>
</dbReference>
<dbReference type="Ensembl" id="ENSMUST00000119344.8">
    <molecule id="Q9JJV2-3"/>
    <property type="protein sequence ID" value="ENSMUSP00000112391.2"/>
    <property type="gene ID" value="ENSMUSG00000027805.17"/>
</dbReference>
<dbReference type="Ensembl" id="ENSMUST00000122210.2">
    <molecule id="Q9JJV2-3"/>
    <property type="protein sequence ID" value="ENSMUSP00000113526.2"/>
    <property type="gene ID" value="ENSMUSG00000027805.17"/>
</dbReference>
<dbReference type="GeneID" id="18645"/>
<dbReference type="KEGG" id="mmu:18645"/>
<dbReference type="UCSC" id="uc008phm.1">
    <molecule id="Q9JJV2-1"/>
    <property type="organism name" value="mouse"/>
</dbReference>
<dbReference type="AGR" id="MGI:97550"/>
<dbReference type="CTD" id="5217"/>
<dbReference type="MGI" id="MGI:97550">
    <property type="gene designation" value="Pfn2"/>
</dbReference>
<dbReference type="VEuPathDB" id="HostDB:ENSMUSG00000027805"/>
<dbReference type="eggNOG" id="KOG1755">
    <property type="taxonomic scope" value="Eukaryota"/>
</dbReference>
<dbReference type="GeneTree" id="ENSGT00940000153664"/>
<dbReference type="HOGENOM" id="CLU_123405_1_0_1"/>
<dbReference type="InParanoid" id="Q9JJV2"/>
<dbReference type="OMA" id="NKKAHSM"/>
<dbReference type="OrthoDB" id="421374at2759"/>
<dbReference type="PhylomeDB" id="Q9JJV2"/>
<dbReference type="TreeFam" id="TF331744"/>
<dbReference type="Reactome" id="R-MMU-376176">
    <property type="pathway name" value="Signaling by ROBO receptors"/>
</dbReference>
<dbReference type="Reactome" id="R-MMU-5663220">
    <property type="pathway name" value="RHO GTPases Activate Formins"/>
</dbReference>
<dbReference type="BioGRID-ORCS" id="18645">
    <property type="hits" value="0 hits in 78 CRISPR screens"/>
</dbReference>
<dbReference type="ChiTaRS" id="Pfn2">
    <property type="organism name" value="mouse"/>
</dbReference>
<dbReference type="EvolutionaryTrace" id="Q9JJV2"/>
<dbReference type="PRO" id="PR:Q9JJV2"/>
<dbReference type="Proteomes" id="UP000000589">
    <property type="component" value="Chromosome 3"/>
</dbReference>
<dbReference type="RNAct" id="Q9JJV2">
    <property type="molecule type" value="protein"/>
</dbReference>
<dbReference type="Bgee" id="ENSMUSG00000027805">
    <property type="expression patterns" value="Expressed in medial ganglionic eminence and 261 other cell types or tissues"/>
</dbReference>
<dbReference type="ExpressionAtlas" id="Q9JJV2">
    <property type="expression patterns" value="baseline and differential"/>
</dbReference>
<dbReference type="GO" id="GO:0005856">
    <property type="term" value="C:cytoskeleton"/>
    <property type="evidence" value="ECO:0007669"/>
    <property type="project" value="UniProtKB-SubCell"/>
</dbReference>
<dbReference type="GO" id="GO:0005829">
    <property type="term" value="C:cytosol"/>
    <property type="evidence" value="ECO:0000304"/>
    <property type="project" value="Reactome"/>
</dbReference>
<dbReference type="GO" id="GO:0098978">
    <property type="term" value="C:glutamatergic synapse"/>
    <property type="evidence" value="ECO:0000314"/>
    <property type="project" value="SynGO"/>
</dbReference>
<dbReference type="GO" id="GO:0098794">
    <property type="term" value="C:postsynapse"/>
    <property type="evidence" value="ECO:0000314"/>
    <property type="project" value="SynGO"/>
</dbReference>
<dbReference type="GO" id="GO:0098793">
    <property type="term" value="C:presynapse"/>
    <property type="evidence" value="ECO:0000314"/>
    <property type="project" value="SynGO"/>
</dbReference>
<dbReference type="GO" id="GO:0098685">
    <property type="term" value="C:Schaffer collateral - CA1 synapse"/>
    <property type="evidence" value="ECO:0000314"/>
    <property type="project" value="SynGO"/>
</dbReference>
<dbReference type="GO" id="GO:0043195">
    <property type="term" value="C:terminal bouton"/>
    <property type="evidence" value="ECO:0000314"/>
    <property type="project" value="MGI"/>
</dbReference>
<dbReference type="GO" id="GO:0003785">
    <property type="term" value="F:actin monomer binding"/>
    <property type="evidence" value="ECO:0007669"/>
    <property type="project" value="Ensembl"/>
</dbReference>
<dbReference type="GO" id="GO:0016887">
    <property type="term" value="F:ATP hydrolysis activity"/>
    <property type="evidence" value="ECO:0007669"/>
    <property type="project" value="Ensembl"/>
</dbReference>
<dbReference type="GO" id="GO:0005546">
    <property type="term" value="F:phosphatidylinositol-4,5-bisphosphate binding"/>
    <property type="evidence" value="ECO:0007669"/>
    <property type="project" value="Ensembl"/>
</dbReference>
<dbReference type="GO" id="GO:0098885">
    <property type="term" value="P:modification of postsynaptic actin cytoskeleton"/>
    <property type="evidence" value="ECO:0000314"/>
    <property type="project" value="SynGO"/>
</dbReference>
<dbReference type="GO" id="GO:0050804">
    <property type="term" value="P:modulation of chemical synaptic transmission"/>
    <property type="evidence" value="ECO:0000314"/>
    <property type="project" value="SynGO"/>
</dbReference>
<dbReference type="GO" id="GO:0030837">
    <property type="term" value="P:negative regulation of actin filament polymerization"/>
    <property type="evidence" value="ECO:0000314"/>
    <property type="project" value="MGI"/>
</dbReference>
<dbReference type="GO" id="GO:0010633">
    <property type="term" value="P:negative regulation of epithelial cell migration"/>
    <property type="evidence" value="ECO:0000315"/>
    <property type="project" value="UniProtKB"/>
</dbReference>
<dbReference type="GO" id="GO:1900028">
    <property type="term" value="P:negative regulation of ruffle assembly"/>
    <property type="evidence" value="ECO:0000315"/>
    <property type="project" value="UniProtKB"/>
</dbReference>
<dbReference type="GO" id="GO:0030838">
    <property type="term" value="P:positive regulation of actin filament polymerization"/>
    <property type="evidence" value="ECO:0000315"/>
    <property type="project" value="MGI"/>
</dbReference>
<dbReference type="GO" id="GO:0033138">
    <property type="term" value="P:positive regulation of peptidyl-serine phosphorylation"/>
    <property type="evidence" value="ECO:0000315"/>
    <property type="project" value="UniProtKB"/>
</dbReference>
<dbReference type="GO" id="GO:0051496">
    <property type="term" value="P:positive regulation of stress fiber assembly"/>
    <property type="evidence" value="ECO:0000315"/>
    <property type="project" value="UniProtKB"/>
</dbReference>
<dbReference type="GO" id="GO:0099140">
    <property type="term" value="P:presynaptic actin cytoskeleton organization"/>
    <property type="evidence" value="ECO:0000314"/>
    <property type="project" value="SynGO"/>
</dbReference>
<dbReference type="GO" id="GO:0099171">
    <property type="term" value="P:presynaptic modulation of chemical synaptic transmission"/>
    <property type="evidence" value="ECO:0000314"/>
    <property type="project" value="SynGO"/>
</dbReference>
<dbReference type="GO" id="GO:0050821">
    <property type="term" value="P:protein stabilization"/>
    <property type="evidence" value="ECO:0007669"/>
    <property type="project" value="Ensembl"/>
</dbReference>
<dbReference type="GO" id="GO:2000300">
    <property type="term" value="P:regulation of synaptic vesicle exocytosis"/>
    <property type="evidence" value="ECO:0000315"/>
    <property type="project" value="MGI"/>
</dbReference>
<dbReference type="CDD" id="cd00148">
    <property type="entry name" value="PROF"/>
    <property type="match status" value="1"/>
</dbReference>
<dbReference type="FunFam" id="3.30.450.30:FF:000006">
    <property type="entry name" value="Profilin"/>
    <property type="match status" value="1"/>
</dbReference>
<dbReference type="Gene3D" id="3.30.450.30">
    <property type="entry name" value="Dynein light chain 2a, cytoplasmic"/>
    <property type="match status" value="1"/>
</dbReference>
<dbReference type="InterPro" id="IPR048278">
    <property type="entry name" value="PFN"/>
</dbReference>
<dbReference type="InterPro" id="IPR005455">
    <property type="entry name" value="PFN_euk"/>
</dbReference>
<dbReference type="InterPro" id="IPR036140">
    <property type="entry name" value="PFN_sf"/>
</dbReference>
<dbReference type="InterPro" id="IPR005454">
    <property type="entry name" value="Profilin1/2/3_vertebrate"/>
</dbReference>
<dbReference type="InterPro" id="IPR027310">
    <property type="entry name" value="Profilin_CS"/>
</dbReference>
<dbReference type="PANTHER" id="PTHR13936">
    <property type="entry name" value="PROFILIN"/>
    <property type="match status" value="1"/>
</dbReference>
<dbReference type="PANTHER" id="PTHR13936:SF15">
    <property type="entry name" value="PROFILIN-2"/>
    <property type="match status" value="1"/>
</dbReference>
<dbReference type="Pfam" id="PF00235">
    <property type="entry name" value="Profilin"/>
    <property type="match status" value="1"/>
</dbReference>
<dbReference type="PRINTS" id="PR00392">
    <property type="entry name" value="PROFILIN"/>
</dbReference>
<dbReference type="PRINTS" id="PR01639">
    <property type="entry name" value="PROFILINMAML"/>
</dbReference>
<dbReference type="SMART" id="SM00392">
    <property type="entry name" value="PROF"/>
    <property type="match status" value="1"/>
</dbReference>
<dbReference type="SUPFAM" id="SSF55770">
    <property type="entry name" value="Profilin (actin-binding protein)"/>
    <property type="match status" value="1"/>
</dbReference>
<dbReference type="PROSITE" id="PS00414">
    <property type="entry name" value="PROFILIN"/>
    <property type="match status" value="1"/>
</dbReference>
<comment type="function">
    <text>Binds to actin and affects the structure of the cytoskeleton. At high concentrations, profilin prevents the polymerization of actin, whereas it enhances it at low concentrations. By binding to PIP2, it inhibits the formation of IP3 and DG.</text>
</comment>
<comment type="subunit">
    <text evidence="1 2">Occurs in many kinds of cells as a complex with monomeric actin in a 1:1 ratio (By similarity). Interacts with PFN2 (PubMed:19403918).</text>
</comment>
<comment type="subunit">
    <molecule>Isoform 1</molecule>
    <text evidence="1">Interacts with ACTMAP (via N-terminus); the interaction may facilitate efficient cleavage of the acetylated N-terminus of immature actin by ACTMAP.</text>
</comment>
<comment type="subunit">
    <molecule>Isoform 2</molecule>
    <text evidence="1">Interacts with ACTMAP (via N-terminus); the interaction may facilitate efficient cleavage of the acetylated N-terminus of immature actin by ACTMAP.</text>
</comment>
<comment type="interaction">
    <interactant intactId="EBI-990256">
        <id>Q9JJV2-1</id>
    </interactant>
    <interactant intactId="EBI-397785">
        <id>P39053</id>
        <label>Dnm1</label>
    </interactant>
    <organismsDiffer>false</organismsDiffer>
    <experiments>2</experiments>
</comment>
<comment type="subcellular location">
    <subcellularLocation>
        <location>Cytoplasm</location>
        <location>Cytoskeleton</location>
    </subcellularLocation>
</comment>
<comment type="alternative products">
    <event type="alternative splicing"/>
    <isoform>
        <id>Q9JJV2-1</id>
        <name>1</name>
        <name>IIa</name>
        <sequence type="displayed"/>
    </isoform>
    <isoform>
        <id>Q9JJV2-2</id>
        <name>2</name>
        <name>IIb</name>
        <sequence type="described" ref="VSP_005218"/>
    </isoform>
    <isoform>
        <id>Q9JJV2-3</id>
        <name>3</name>
        <sequence type="described" ref="VSP_024736"/>
    </isoform>
</comment>
<comment type="tissue specificity">
    <text>Isoform IIa is the main isoform and is abundant in brain. Isoform IIb is a minor isoform.</text>
</comment>
<comment type="similarity">
    <text evidence="5">Belongs to the profilin family.</text>
</comment>
<organism>
    <name type="scientific">Mus musculus</name>
    <name type="common">Mouse</name>
    <dbReference type="NCBI Taxonomy" id="10090"/>
    <lineage>
        <taxon>Eukaryota</taxon>
        <taxon>Metazoa</taxon>
        <taxon>Chordata</taxon>
        <taxon>Craniata</taxon>
        <taxon>Vertebrata</taxon>
        <taxon>Euteleostomi</taxon>
        <taxon>Mammalia</taxon>
        <taxon>Eutheria</taxon>
        <taxon>Euarchontoglires</taxon>
        <taxon>Glires</taxon>
        <taxon>Rodentia</taxon>
        <taxon>Myomorpha</taxon>
        <taxon>Muroidea</taxon>
        <taxon>Muridae</taxon>
        <taxon>Murinae</taxon>
        <taxon>Mus</taxon>
        <taxon>Mus</taxon>
    </lineage>
</organism>
<accession>Q9JJV2</accession>
<accession>Q3TPT7</accession>
<accession>Q3V171</accession>
<accession>Q9ES48</accession>
<accession>Q9ES49</accession>
<accession>Q9ES50</accession>
<keyword id="KW-0002">3D-structure</keyword>
<keyword id="KW-0007">Acetylation</keyword>
<keyword id="KW-0009">Actin-binding</keyword>
<keyword id="KW-0025">Alternative splicing</keyword>
<keyword id="KW-0963">Cytoplasm</keyword>
<keyword id="KW-0206">Cytoskeleton</keyword>
<keyword id="KW-0903">Direct protein sequencing</keyword>
<keyword id="KW-1185">Reference proteome</keyword>
<evidence type="ECO:0000250" key="1">
    <source>
        <dbReference type="UniProtKB" id="P35080"/>
    </source>
</evidence>
<evidence type="ECO:0000269" key="2">
    <source>
    </source>
</evidence>
<evidence type="ECO:0000303" key="3">
    <source>
    </source>
</evidence>
<evidence type="ECO:0000303" key="4">
    <source>
    </source>
</evidence>
<evidence type="ECO:0000305" key="5"/>
<evidence type="ECO:0007829" key="6">
    <source>
        <dbReference type="PDB" id="2V8F"/>
    </source>
</evidence>
<feature type="initiator methionine" description="Removed" evidence="1">
    <location>
        <position position="1"/>
    </location>
</feature>
<feature type="chain" id="PRO_0000199576" description="Profilin-2">
    <location>
        <begin position="2"/>
        <end position="140"/>
    </location>
</feature>
<feature type="modified residue" description="N-acetylalanine" evidence="1">
    <location>
        <position position="2"/>
    </location>
</feature>
<feature type="splice variant" id="VSP_024736" description="In isoform 3." evidence="4">
    <location>
        <begin position="1"/>
        <end position="49"/>
    </location>
</feature>
<feature type="splice variant" id="VSP_005218" description="In isoform 2." evidence="3">
    <original>VLVFVMGKEGVHGGGLNKKAYSMAKYLRDSGF</original>
    <variation>ALVIVMGKEGVHAGTINKKTYELALYLKRSVTNLYLAS</variation>
    <location>
        <begin position="109"/>
        <end position="140"/>
    </location>
</feature>
<feature type="sequence conflict" description="In Ref. 2; AAG09753/AAG09756." evidence="5" ref="2">
    <original>A</original>
    <variation>G</variation>
    <location>
        <position position="36"/>
    </location>
</feature>
<feature type="helix" evidence="6">
    <location>
        <begin position="5"/>
        <end position="12"/>
    </location>
</feature>
<feature type="strand" evidence="6">
    <location>
        <begin position="17"/>
        <end position="24"/>
    </location>
</feature>
<feature type="strand" evidence="6">
    <location>
        <begin position="26"/>
        <end position="28"/>
    </location>
</feature>
<feature type="strand" evidence="6">
    <location>
        <begin position="30"/>
        <end position="34"/>
    </location>
</feature>
<feature type="helix" evidence="6">
    <location>
        <begin position="40"/>
        <end position="42"/>
    </location>
</feature>
<feature type="helix" evidence="6">
    <location>
        <begin position="45"/>
        <end position="52"/>
    </location>
</feature>
<feature type="helix" evidence="6">
    <location>
        <begin position="58"/>
        <end position="62"/>
    </location>
</feature>
<feature type="strand" evidence="6">
    <location>
        <begin position="64"/>
        <end position="66"/>
    </location>
</feature>
<feature type="strand" evidence="6">
    <location>
        <begin position="69"/>
        <end position="76"/>
    </location>
</feature>
<feature type="turn" evidence="6">
    <location>
        <begin position="81"/>
        <end position="83"/>
    </location>
</feature>
<feature type="strand" evidence="6">
    <location>
        <begin position="85"/>
        <end position="90"/>
    </location>
</feature>
<feature type="strand" evidence="6">
    <location>
        <begin position="94"/>
        <end position="96"/>
    </location>
</feature>
<feature type="strand" evidence="6">
    <location>
        <begin position="100"/>
        <end position="105"/>
    </location>
</feature>
<feature type="strand" evidence="6">
    <location>
        <begin position="107"/>
        <end position="115"/>
    </location>
</feature>
<feature type="helix" evidence="6">
    <location>
        <begin position="121"/>
        <end position="137"/>
    </location>
</feature>